<comment type="function">
    <text evidence="2">Catalyzes the reversible phosphorolytic breakdown of the N-glycosidic bond in the beta-(deoxy)ribonucleoside molecules, with the formation of the corresponding free purine bases and pentose-1-phosphate.</text>
</comment>
<comment type="catalytic activity">
    <reaction evidence="2">
        <text>a purine D-ribonucleoside + phosphate = a purine nucleobase + alpha-D-ribose 1-phosphate</text>
        <dbReference type="Rhea" id="RHEA:19805"/>
        <dbReference type="ChEBI" id="CHEBI:26386"/>
        <dbReference type="ChEBI" id="CHEBI:43474"/>
        <dbReference type="ChEBI" id="CHEBI:57720"/>
        <dbReference type="ChEBI" id="CHEBI:142355"/>
        <dbReference type="EC" id="2.4.2.1"/>
    </reaction>
</comment>
<comment type="catalytic activity">
    <reaction evidence="2">
        <text>a purine 2'-deoxy-D-ribonucleoside + phosphate = a purine nucleobase + 2-deoxy-alpha-D-ribose 1-phosphate</text>
        <dbReference type="Rhea" id="RHEA:36431"/>
        <dbReference type="ChEBI" id="CHEBI:26386"/>
        <dbReference type="ChEBI" id="CHEBI:43474"/>
        <dbReference type="ChEBI" id="CHEBI:57259"/>
        <dbReference type="ChEBI" id="CHEBI:142361"/>
        <dbReference type="EC" id="2.4.2.1"/>
    </reaction>
</comment>
<comment type="subunit">
    <text evidence="2">Homohexamer; trimer of homodimers.</text>
</comment>
<comment type="similarity">
    <text evidence="2">Belongs to the PNP/UDP phosphorylase family.</text>
</comment>
<dbReference type="EC" id="2.4.2.1" evidence="2"/>
<dbReference type="EMBL" id="CP001138">
    <property type="protein sequence ID" value="ACH50291.1"/>
    <property type="molecule type" value="Genomic_DNA"/>
</dbReference>
<dbReference type="RefSeq" id="WP_000224864.1">
    <property type="nucleotide sequence ID" value="NC_011149.1"/>
</dbReference>
<dbReference type="SMR" id="B5F527"/>
<dbReference type="GeneID" id="89550598"/>
<dbReference type="KEGG" id="sea:SeAg_B4892"/>
<dbReference type="HOGENOM" id="CLU_068457_2_0_6"/>
<dbReference type="Proteomes" id="UP000008819">
    <property type="component" value="Chromosome"/>
</dbReference>
<dbReference type="GO" id="GO:0005829">
    <property type="term" value="C:cytosol"/>
    <property type="evidence" value="ECO:0007669"/>
    <property type="project" value="TreeGrafter"/>
</dbReference>
<dbReference type="GO" id="GO:0004731">
    <property type="term" value="F:purine-nucleoside phosphorylase activity"/>
    <property type="evidence" value="ECO:0007669"/>
    <property type="project" value="UniProtKB-UniRule"/>
</dbReference>
<dbReference type="GO" id="GO:0006152">
    <property type="term" value="P:purine nucleoside catabolic process"/>
    <property type="evidence" value="ECO:0007669"/>
    <property type="project" value="TreeGrafter"/>
</dbReference>
<dbReference type="CDD" id="cd09006">
    <property type="entry name" value="PNP_EcPNPI-like"/>
    <property type="match status" value="1"/>
</dbReference>
<dbReference type="FunFam" id="3.40.50.1580:FF:000002">
    <property type="entry name" value="Purine nucleoside phosphorylase DeoD-type"/>
    <property type="match status" value="1"/>
</dbReference>
<dbReference type="Gene3D" id="3.40.50.1580">
    <property type="entry name" value="Nucleoside phosphorylase domain"/>
    <property type="match status" value="1"/>
</dbReference>
<dbReference type="HAMAP" id="MF_01627">
    <property type="entry name" value="Pur_nucleosid_phosp"/>
    <property type="match status" value="1"/>
</dbReference>
<dbReference type="InterPro" id="IPR004402">
    <property type="entry name" value="DeoD-type"/>
</dbReference>
<dbReference type="InterPro" id="IPR018016">
    <property type="entry name" value="Nucleoside_phosphorylase_CS"/>
</dbReference>
<dbReference type="InterPro" id="IPR000845">
    <property type="entry name" value="Nucleoside_phosphorylase_d"/>
</dbReference>
<dbReference type="InterPro" id="IPR035994">
    <property type="entry name" value="Nucleoside_phosphorylase_sf"/>
</dbReference>
<dbReference type="NCBIfam" id="TIGR00107">
    <property type="entry name" value="deoD"/>
    <property type="match status" value="1"/>
</dbReference>
<dbReference type="NCBIfam" id="NF004489">
    <property type="entry name" value="PRK05819.1"/>
    <property type="match status" value="1"/>
</dbReference>
<dbReference type="NCBIfam" id="NF009914">
    <property type="entry name" value="PRK13374.1"/>
    <property type="match status" value="1"/>
</dbReference>
<dbReference type="PANTHER" id="PTHR43691:SF2">
    <property type="entry name" value="PURINE NUCLEOSIDE PHOSPHORYLASE DEOD-TYPE"/>
    <property type="match status" value="1"/>
</dbReference>
<dbReference type="PANTHER" id="PTHR43691">
    <property type="entry name" value="URIDINE PHOSPHORYLASE"/>
    <property type="match status" value="1"/>
</dbReference>
<dbReference type="Pfam" id="PF01048">
    <property type="entry name" value="PNP_UDP_1"/>
    <property type="match status" value="1"/>
</dbReference>
<dbReference type="SUPFAM" id="SSF53167">
    <property type="entry name" value="Purine and uridine phosphorylases"/>
    <property type="match status" value="1"/>
</dbReference>
<dbReference type="PROSITE" id="PS01232">
    <property type="entry name" value="PNP_UDP_1"/>
    <property type="match status" value="1"/>
</dbReference>
<name>DEOD_SALA4</name>
<protein>
    <recommendedName>
        <fullName evidence="2">Purine nucleoside phosphorylase DeoD-type</fullName>
        <shortName evidence="2">PNP</shortName>
        <ecNumber evidence="2">2.4.2.1</ecNumber>
    </recommendedName>
</protein>
<sequence>MATPHINAEMGDFADVVLMPGDPLRAKHIAETFLEDVREVNNVRGMLGFTGTYKGRKISVMGHGMGIPSCSIYTKELITDFGVKKIIRVGSCGAVRMDVKLRDVVIGMGACTDSKVNRIRFKDHDFAAIADFDMVRNAVDAAKALGVDARVGNLFSADLFYSPDGEMFDVMEKYGVLGVEMEAAGIYGVAAEFGAKALTICTVSDHIRTHEQTTAAERQTTFNDMIKIALESVLLGDKE</sequence>
<proteinExistence type="inferred from homology"/>
<gene>
    <name evidence="2" type="primary">deoD</name>
    <name type="ordered locus">SeAg_B4892</name>
</gene>
<keyword id="KW-0328">Glycosyltransferase</keyword>
<keyword id="KW-0808">Transferase</keyword>
<reference key="1">
    <citation type="journal article" date="2011" name="J. Bacteriol.">
        <title>Comparative genomics of 28 Salmonella enterica isolates: evidence for CRISPR-mediated adaptive sublineage evolution.</title>
        <authorList>
            <person name="Fricke W.F."/>
            <person name="Mammel M.K."/>
            <person name="McDermott P.F."/>
            <person name="Tartera C."/>
            <person name="White D.G."/>
            <person name="Leclerc J.E."/>
            <person name="Ravel J."/>
            <person name="Cebula T.A."/>
        </authorList>
    </citation>
    <scope>NUCLEOTIDE SEQUENCE [LARGE SCALE GENOMIC DNA]</scope>
    <source>
        <strain>SL483</strain>
    </source>
</reference>
<feature type="chain" id="PRO_1000186214" description="Purine nucleoside phosphorylase DeoD-type">
    <location>
        <begin position="1"/>
        <end position="239"/>
    </location>
</feature>
<feature type="active site" description="Proton donor" evidence="2">
    <location>
        <position position="205"/>
    </location>
</feature>
<feature type="binding site" evidence="1">
    <location>
        <position position="5"/>
    </location>
    <ligand>
        <name>a purine D-ribonucleoside</name>
        <dbReference type="ChEBI" id="CHEBI:142355"/>
        <note>ligand shared between dimeric partners</note>
    </ligand>
</feature>
<feature type="binding site" description="in other chain" evidence="1">
    <location>
        <position position="21"/>
    </location>
    <ligand>
        <name>phosphate</name>
        <dbReference type="ChEBI" id="CHEBI:43474"/>
        <note>ligand shared between dimeric partners</note>
    </ligand>
</feature>
<feature type="binding site" description="in other chain" evidence="1">
    <location>
        <position position="25"/>
    </location>
    <ligand>
        <name>phosphate</name>
        <dbReference type="ChEBI" id="CHEBI:43474"/>
        <note>ligand shared between dimeric partners</note>
    </ligand>
</feature>
<feature type="binding site" evidence="1">
    <location>
        <position position="44"/>
    </location>
    <ligand>
        <name>phosphate</name>
        <dbReference type="ChEBI" id="CHEBI:43474"/>
        <note>ligand shared between dimeric partners</note>
    </ligand>
</feature>
<feature type="binding site" description="in other chain" evidence="1">
    <location>
        <begin position="88"/>
        <end position="91"/>
    </location>
    <ligand>
        <name>phosphate</name>
        <dbReference type="ChEBI" id="CHEBI:43474"/>
        <note>ligand shared between dimeric partners</note>
    </ligand>
</feature>
<feature type="binding site" description="in other chain" evidence="1">
    <location>
        <begin position="180"/>
        <end position="182"/>
    </location>
    <ligand>
        <name>a purine D-ribonucleoside</name>
        <dbReference type="ChEBI" id="CHEBI:142355"/>
        <note>ligand shared between dimeric partners</note>
    </ligand>
</feature>
<feature type="binding site" description="in other chain" evidence="1">
    <location>
        <begin position="204"/>
        <end position="205"/>
    </location>
    <ligand>
        <name>a purine D-ribonucleoside</name>
        <dbReference type="ChEBI" id="CHEBI:142355"/>
        <note>ligand shared between dimeric partners</note>
    </ligand>
</feature>
<feature type="site" description="Important for catalytic activity" evidence="2">
    <location>
        <position position="218"/>
    </location>
</feature>
<organism>
    <name type="scientific">Salmonella agona (strain SL483)</name>
    <dbReference type="NCBI Taxonomy" id="454166"/>
    <lineage>
        <taxon>Bacteria</taxon>
        <taxon>Pseudomonadati</taxon>
        <taxon>Pseudomonadota</taxon>
        <taxon>Gammaproteobacteria</taxon>
        <taxon>Enterobacterales</taxon>
        <taxon>Enterobacteriaceae</taxon>
        <taxon>Salmonella</taxon>
    </lineage>
</organism>
<accession>B5F527</accession>
<evidence type="ECO:0000250" key="1">
    <source>
        <dbReference type="UniProtKB" id="P50389"/>
    </source>
</evidence>
<evidence type="ECO:0000255" key="2">
    <source>
        <dbReference type="HAMAP-Rule" id="MF_01627"/>
    </source>
</evidence>